<keyword id="KW-0285">Flavoprotein</keyword>
<keyword id="KW-0288">FMN</keyword>
<keyword id="KW-0560">Oxidoreductase</keyword>
<keyword id="KW-0664">Pyridoxine biosynthesis</keyword>
<keyword id="KW-1185">Reference proteome</keyword>
<organism>
    <name type="scientific">Vesicomyosocius okutanii subsp. Calyptogena okutanii (strain HA)</name>
    <dbReference type="NCBI Taxonomy" id="412965"/>
    <lineage>
        <taxon>Bacteria</taxon>
        <taxon>Pseudomonadati</taxon>
        <taxon>Pseudomonadota</taxon>
        <taxon>Gammaproteobacteria</taxon>
        <taxon>Candidatus Pseudothioglobaceae</taxon>
        <taxon>Candidatus Vesicomyosocius</taxon>
    </lineage>
</organism>
<accession>A5CX08</accession>
<gene>
    <name evidence="1" type="primary">pdxH</name>
    <name type="ordered locus">COSY_0404</name>
</gene>
<dbReference type="EC" id="1.4.3.5" evidence="1"/>
<dbReference type="EMBL" id="AP009247">
    <property type="protein sequence ID" value="BAF61523.1"/>
    <property type="molecule type" value="Genomic_DNA"/>
</dbReference>
<dbReference type="RefSeq" id="WP_011929793.1">
    <property type="nucleotide sequence ID" value="NC_009465.1"/>
</dbReference>
<dbReference type="SMR" id="A5CX08"/>
<dbReference type="STRING" id="412965.COSY_0404"/>
<dbReference type="KEGG" id="vok:COSY_0404"/>
<dbReference type="eggNOG" id="COG0259">
    <property type="taxonomic scope" value="Bacteria"/>
</dbReference>
<dbReference type="HOGENOM" id="CLU_032263_2_3_6"/>
<dbReference type="OrthoDB" id="9780392at2"/>
<dbReference type="UniPathway" id="UPA01068">
    <property type="reaction ID" value="UER00304"/>
</dbReference>
<dbReference type="UniPathway" id="UPA01068">
    <property type="reaction ID" value="UER00305"/>
</dbReference>
<dbReference type="Proteomes" id="UP000000247">
    <property type="component" value="Chromosome"/>
</dbReference>
<dbReference type="GO" id="GO:0010181">
    <property type="term" value="F:FMN binding"/>
    <property type="evidence" value="ECO:0007669"/>
    <property type="project" value="UniProtKB-UniRule"/>
</dbReference>
<dbReference type="GO" id="GO:0004733">
    <property type="term" value="F:pyridoxamine phosphate oxidase activity"/>
    <property type="evidence" value="ECO:0007669"/>
    <property type="project" value="UniProtKB-UniRule"/>
</dbReference>
<dbReference type="GO" id="GO:0008615">
    <property type="term" value="P:pyridoxine biosynthetic process"/>
    <property type="evidence" value="ECO:0007669"/>
    <property type="project" value="UniProtKB-KW"/>
</dbReference>
<dbReference type="Gene3D" id="2.30.110.10">
    <property type="entry name" value="Electron Transport, Fmn-binding Protein, Chain A"/>
    <property type="match status" value="1"/>
</dbReference>
<dbReference type="HAMAP" id="MF_01629">
    <property type="entry name" value="PdxH"/>
    <property type="match status" value="1"/>
</dbReference>
<dbReference type="InterPro" id="IPR000659">
    <property type="entry name" value="Pyridox_Oxase"/>
</dbReference>
<dbReference type="InterPro" id="IPR019740">
    <property type="entry name" value="Pyridox_Oxase_CS"/>
</dbReference>
<dbReference type="InterPro" id="IPR011576">
    <property type="entry name" value="Pyridox_Oxase_N"/>
</dbReference>
<dbReference type="InterPro" id="IPR019576">
    <property type="entry name" value="Pyridoxamine_oxidase_dimer_C"/>
</dbReference>
<dbReference type="InterPro" id="IPR012349">
    <property type="entry name" value="Split_barrel_FMN-bd"/>
</dbReference>
<dbReference type="NCBIfam" id="TIGR00558">
    <property type="entry name" value="pdxH"/>
    <property type="match status" value="1"/>
</dbReference>
<dbReference type="NCBIfam" id="NF004231">
    <property type="entry name" value="PRK05679.1"/>
    <property type="match status" value="1"/>
</dbReference>
<dbReference type="PANTHER" id="PTHR10851:SF0">
    <property type="entry name" value="PYRIDOXINE-5'-PHOSPHATE OXIDASE"/>
    <property type="match status" value="1"/>
</dbReference>
<dbReference type="PANTHER" id="PTHR10851">
    <property type="entry name" value="PYRIDOXINE-5-PHOSPHATE OXIDASE"/>
    <property type="match status" value="1"/>
</dbReference>
<dbReference type="Pfam" id="PF10590">
    <property type="entry name" value="PNP_phzG_C"/>
    <property type="match status" value="1"/>
</dbReference>
<dbReference type="Pfam" id="PF01243">
    <property type="entry name" value="PNPOx_N"/>
    <property type="match status" value="1"/>
</dbReference>
<dbReference type="PIRSF" id="PIRSF000190">
    <property type="entry name" value="Pyd_amn-ph_oxd"/>
    <property type="match status" value="1"/>
</dbReference>
<dbReference type="SUPFAM" id="SSF50475">
    <property type="entry name" value="FMN-binding split barrel"/>
    <property type="match status" value="1"/>
</dbReference>
<dbReference type="PROSITE" id="PS01064">
    <property type="entry name" value="PYRIDOX_OXIDASE"/>
    <property type="match status" value="1"/>
</dbReference>
<feature type="chain" id="PRO_1000069703" description="Pyridoxine/pyridoxamine 5'-phosphate oxidase">
    <location>
        <begin position="1"/>
        <end position="212"/>
    </location>
</feature>
<feature type="binding site" evidence="1">
    <location>
        <begin position="61"/>
        <end position="66"/>
    </location>
    <ligand>
        <name>FMN</name>
        <dbReference type="ChEBI" id="CHEBI:58210"/>
    </ligand>
</feature>
<feature type="binding site" evidence="1">
    <location>
        <position position="66"/>
    </location>
    <ligand>
        <name>substrate</name>
    </ligand>
</feature>
<feature type="binding site" evidence="1">
    <location>
        <begin position="76"/>
        <end position="77"/>
    </location>
    <ligand>
        <name>FMN</name>
        <dbReference type="ChEBI" id="CHEBI:58210"/>
    </ligand>
</feature>
<feature type="binding site" evidence="1">
    <location>
        <position position="82"/>
    </location>
    <ligand>
        <name>FMN</name>
        <dbReference type="ChEBI" id="CHEBI:58210"/>
    </ligand>
</feature>
<feature type="binding site" evidence="1">
    <location>
        <position position="83"/>
    </location>
    <ligand>
        <name>FMN</name>
        <dbReference type="ChEBI" id="CHEBI:58210"/>
    </ligand>
</feature>
<feature type="binding site" evidence="1">
    <location>
        <position position="105"/>
    </location>
    <ligand>
        <name>FMN</name>
        <dbReference type="ChEBI" id="CHEBI:58210"/>
    </ligand>
</feature>
<feature type="binding site" evidence="1">
    <location>
        <position position="123"/>
    </location>
    <ligand>
        <name>substrate</name>
    </ligand>
</feature>
<feature type="binding site" evidence="1">
    <location>
        <position position="127"/>
    </location>
    <ligand>
        <name>substrate</name>
    </ligand>
</feature>
<feature type="binding site" evidence="1">
    <location>
        <position position="131"/>
    </location>
    <ligand>
        <name>substrate</name>
    </ligand>
</feature>
<feature type="binding site" evidence="1">
    <location>
        <begin position="140"/>
        <end position="141"/>
    </location>
    <ligand>
        <name>FMN</name>
        <dbReference type="ChEBI" id="CHEBI:58210"/>
    </ligand>
</feature>
<feature type="binding site" evidence="1">
    <location>
        <position position="185"/>
    </location>
    <ligand>
        <name>FMN</name>
        <dbReference type="ChEBI" id="CHEBI:58210"/>
    </ligand>
</feature>
<feature type="binding site" evidence="1">
    <location>
        <begin position="191"/>
        <end position="193"/>
    </location>
    <ligand>
        <name>substrate</name>
    </ligand>
</feature>
<feature type="binding site" evidence="1">
    <location>
        <position position="195"/>
    </location>
    <ligand>
        <name>FMN</name>
        <dbReference type="ChEBI" id="CHEBI:58210"/>
    </ligand>
</feature>
<evidence type="ECO:0000255" key="1">
    <source>
        <dbReference type="HAMAP-Rule" id="MF_01629"/>
    </source>
</evidence>
<comment type="function">
    <text evidence="1">Catalyzes the oxidation of either pyridoxine 5'-phosphate (PNP) or pyridoxamine 5'-phosphate (PMP) into pyridoxal 5'-phosphate (PLP).</text>
</comment>
<comment type="catalytic activity">
    <reaction evidence="1">
        <text>pyridoxamine 5'-phosphate + O2 + H2O = pyridoxal 5'-phosphate + H2O2 + NH4(+)</text>
        <dbReference type="Rhea" id="RHEA:15817"/>
        <dbReference type="ChEBI" id="CHEBI:15377"/>
        <dbReference type="ChEBI" id="CHEBI:15379"/>
        <dbReference type="ChEBI" id="CHEBI:16240"/>
        <dbReference type="ChEBI" id="CHEBI:28938"/>
        <dbReference type="ChEBI" id="CHEBI:58451"/>
        <dbReference type="ChEBI" id="CHEBI:597326"/>
        <dbReference type="EC" id="1.4.3.5"/>
    </reaction>
</comment>
<comment type="catalytic activity">
    <reaction evidence="1">
        <text>pyridoxine 5'-phosphate + O2 = pyridoxal 5'-phosphate + H2O2</text>
        <dbReference type="Rhea" id="RHEA:15149"/>
        <dbReference type="ChEBI" id="CHEBI:15379"/>
        <dbReference type="ChEBI" id="CHEBI:16240"/>
        <dbReference type="ChEBI" id="CHEBI:58589"/>
        <dbReference type="ChEBI" id="CHEBI:597326"/>
        <dbReference type="EC" id="1.4.3.5"/>
    </reaction>
</comment>
<comment type="cofactor">
    <cofactor evidence="1">
        <name>FMN</name>
        <dbReference type="ChEBI" id="CHEBI:58210"/>
    </cofactor>
    <text evidence="1">Binds 1 FMN per subunit.</text>
</comment>
<comment type="pathway">
    <text evidence="1">Cofactor metabolism; pyridoxal 5'-phosphate salvage; pyridoxal 5'-phosphate from pyridoxamine 5'-phosphate: step 1/1.</text>
</comment>
<comment type="pathway">
    <text evidence="1">Cofactor metabolism; pyridoxal 5'-phosphate salvage; pyridoxal 5'-phosphate from pyridoxine 5'-phosphate: step 1/1.</text>
</comment>
<comment type="subunit">
    <text evidence="1">Homodimer.</text>
</comment>
<comment type="similarity">
    <text evidence="1">Belongs to the pyridoxamine 5'-phosphate oxidase family.</text>
</comment>
<protein>
    <recommendedName>
        <fullName evidence="1">Pyridoxine/pyridoxamine 5'-phosphate oxidase</fullName>
        <ecNumber evidence="1">1.4.3.5</ecNumber>
    </recommendedName>
    <alternativeName>
        <fullName evidence="1">PNP/PMP oxidase</fullName>
        <shortName evidence="1">PNPOx</shortName>
    </alternativeName>
    <alternativeName>
        <fullName evidence="1">Pyridoxal 5'-phosphate synthase</fullName>
    </alternativeName>
</protein>
<proteinExistence type="inferred from homology"/>
<reference key="1">
    <citation type="journal article" date="2007" name="Curr. Biol.">
        <title>Reduced genome of the thioautotrophic intracellular symbiont in a deep-sea clam, Calyptogena okutanii.</title>
        <authorList>
            <person name="Kuwahara H."/>
            <person name="Yoshida T."/>
            <person name="Takaki Y."/>
            <person name="Shimamura S."/>
            <person name="Nishi S."/>
            <person name="Harada M."/>
            <person name="Matsuyama K."/>
            <person name="Takishita K."/>
            <person name="Kawato M."/>
            <person name="Uematsu K."/>
            <person name="Fujiwara Y."/>
            <person name="Sato T."/>
            <person name="Kato C."/>
            <person name="Kitagawa M."/>
            <person name="Kato I."/>
            <person name="Maruyama T."/>
        </authorList>
    </citation>
    <scope>NUCLEOTIDE SEQUENCE [LARGE SCALE GENOMIC DNA]</scope>
    <source>
        <strain>HA</strain>
    </source>
</reference>
<sequence length="212" mass="24638">MKVDLTGLRREFTQSGLNRTDLDNSPFGQFNLWFEQAQKADIIEPSAMSLATSDNNEIGIRTVLLKYFDMYGFVFFTNYNSKKSKELQSNPNVALLFPWLVLERQVKISGYVEKISMLESLKYFSSRPKASQLGSWASQQSSSLSSRKVLLSQFELMKVKFSNGKVPLPDFWGGYRVVPLKIEFWQGRENRLHDRFIYQLNKGKWRIERLAP</sequence>
<name>PDXH_VESOH</name>